<reference key="1">
    <citation type="journal article" date="2002" name="Nature">
        <title>Sequence and analysis of chromosome 2 of Dictyostelium discoideum.</title>
        <authorList>
            <person name="Gloeckner G."/>
            <person name="Eichinger L."/>
            <person name="Szafranski K."/>
            <person name="Pachebat J.A."/>
            <person name="Bankier A.T."/>
            <person name="Dear P.H."/>
            <person name="Lehmann R."/>
            <person name="Baumgart C."/>
            <person name="Parra G."/>
            <person name="Abril J.F."/>
            <person name="Guigo R."/>
            <person name="Kumpf K."/>
            <person name="Tunggal B."/>
            <person name="Cox E.C."/>
            <person name="Quail M.A."/>
            <person name="Platzer M."/>
            <person name="Rosenthal A."/>
            <person name="Noegel A.A."/>
        </authorList>
    </citation>
    <scope>NUCLEOTIDE SEQUENCE [LARGE SCALE GENOMIC DNA]</scope>
    <source>
        <strain>AX4</strain>
    </source>
</reference>
<reference key="2">
    <citation type="journal article" date="2005" name="Nature">
        <title>The genome of the social amoeba Dictyostelium discoideum.</title>
        <authorList>
            <person name="Eichinger L."/>
            <person name="Pachebat J.A."/>
            <person name="Gloeckner G."/>
            <person name="Rajandream M.A."/>
            <person name="Sucgang R."/>
            <person name="Berriman M."/>
            <person name="Song J."/>
            <person name="Olsen R."/>
            <person name="Szafranski K."/>
            <person name="Xu Q."/>
            <person name="Tunggal B."/>
            <person name="Kummerfeld S."/>
            <person name="Madera M."/>
            <person name="Konfortov B.A."/>
            <person name="Rivero F."/>
            <person name="Bankier A.T."/>
            <person name="Lehmann R."/>
            <person name="Hamlin N."/>
            <person name="Davies R."/>
            <person name="Gaudet P."/>
            <person name="Fey P."/>
            <person name="Pilcher K."/>
            <person name="Chen G."/>
            <person name="Saunders D."/>
            <person name="Sodergren E.J."/>
            <person name="Davis P."/>
            <person name="Kerhornou A."/>
            <person name="Nie X."/>
            <person name="Hall N."/>
            <person name="Anjard C."/>
            <person name="Hemphill L."/>
            <person name="Bason N."/>
            <person name="Farbrother P."/>
            <person name="Desany B."/>
            <person name="Just E."/>
            <person name="Morio T."/>
            <person name="Rost R."/>
            <person name="Churcher C.M."/>
            <person name="Cooper J."/>
            <person name="Haydock S."/>
            <person name="van Driessche N."/>
            <person name="Cronin A."/>
            <person name="Goodhead I."/>
            <person name="Muzny D.M."/>
            <person name="Mourier T."/>
            <person name="Pain A."/>
            <person name="Lu M."/>
            <person name="Harper D."/>
            <person name="Lindsay R."/>
            <person name="Hauser H."/>
            <person name="James K.D."/>
            <person name="Quiles M."/>
            <person name="Madan Babu M."/>
            <person name="Saito T."/>
            <person name="Buchrieser C."/>
            <person name="Wardroper A."/>
            <person name="Felder M."/>
            <person name="Thangavelu M."/>
            <person name="Johnson D."/>
            <person name="Knights A."/>
            <person name="Loulseged H."/>
            <person name="Mungall K.L."/>
            <person name="Oliver K."/>
            <person name="Price C."/>
            <person name="Quail M.A."/>
            <person name="Urushihara H."/>
            <person name="Hernandez J."/>
            <person name="Rabbinowitsch E."/>
            <person name="Steffen D."/>
            <person name="Sanders M."/>
            <person name="Ma J."/>
            <person name="Kohara Y."/>
            <person name="Sharp S."/>
            <person name="Simmonds M.N."/>
            <person name="Spiegler S."/>
            <person name="Tivey A."/>
            <person name="Sugano S."/>
            <person name="White B."/>
            <person name="Walker D."/>
            <person name="Woodward J.R."/>
            <person name="Winckler T."/>
            <person name="Tanaka Y."/>
            <person name="Shaulsky G."/>
            <person name="Schleicher M."/>
            <person name="Weinstock G.M."/>
            <person name="Rosenthal A."/>
            <person name="Cox E.C."/>
            <person name="Chisholm R.L."/>
            <person name="Gibbs R.A."/>
            <person name="Loomis W.F."/>
            <person name="Platzer M."/>
            <person name="Kay R.R."/>
            <person name="Williams J.G."/>
            <person name="Dear P.H."/>
            <person name="Noegel A.A."/>
            <person name="Barrell B.G."/>
            <person name="Kuspa A."/>
        </authorList>
    </citation>
    <scope>NUCLEOTIDE SEQUENCE [LARGE SCALE GENOMIC DNA]</scope>
    <source>
        <strain>AX4</strain>
    </source>
</reference>
<organism>
    <name type="scientific">Dictyostelium discoideum</name>
    <name type="common">Social amoeba</name>
    <dbReference type="NCBI Taxonomy" id="44689"/>
    <lineage>
        <taxon>Eukaryota</taxon>
        <taxon>Amoebozoa</taxon>
        <taxon>Evosea</taxon>
        <taxon>Eumycetozoa</taxon>
        <taxon>Dictyostelia</taxon>
        <taxon>Dictyosteliales</taxon>
        <taxon>Dictyosteliaceae</taxon>
        <taxon>Dictyostelium</taxon>
    </lineage>
</organism>
<comment type="function">
    <text evidence="1">E2 conjugating enzyme required for the cytoplasm to vacuole transport (Cvt), and autophagy. Responsible for the E2-like covalent binding of phosphatidylethanolamine to the C-terminal Gly of atg8. The atg12-atg5 conjugate plays a role of an E3 and promotes the transfer of atg8 from atg3 to phosphatidylethanolamine (PE). This step is required for the membrane association of atg8. The formation of the atg8-phosphatidylethanolamine conjugates is essential for autophagy and for the cytoplasm to vacuole transport (Cvt) (By similarity).</text>
</comment>
<comment type="subunit">
    <text evidence="1">Interacts with atg7 and atg12. The complex composed of atg3 and atg7 plays a role in the conjugation of atg12 to atg5.</text>
</comment>
<comment type="subcellular location">
    <subcellularLocation>
        <location evidence="1">Cytoplasm</location>
    </subcellularLocation>
</comment>
<comment type="PTM">
    <text evidence="1">Conjugated to atg12. atg12-conjugation plays a role in regulation of mitochondrial homeostasis and cell death, while it is not involved in PE-conjugation to atg8 and autophagy (By similarity).</text>
</comment>
<comment type="similarity">
    <text evidence="4">Belongs to the ATG3 family.</text>
</comment>
<dbReference type="EMBL" id="AAFI02000019">
    <property type="protein sequence ID" value="EAL68846.2"/>
    <property type="molecule type" value="Genomic_DNA"/>
</dbReference>
<dbReference type="RefSeq" id="XP_642708.2">
    <property type="nucleotide sequence ID" value="XM_637616.2"/>
</dbReference>
<dbReference type="SMR" id="Q550A8"/>
<dbReference type="BioGRID" id="1245903">
    <property type="interactions" value="1"/>
</dbReference>
<dbReference type="FunCoup" id="Q550A8">
    <property type="interactions" value="1127"/>
</dbReference>
<dbReference type="STRING" id="44689.Q550A8"/>
<dbReference type="PaxDb" id="44689-DDB0252605"/>
<dbReference type="EnsemblProtists" id="EAL68846">
    <property type="protein sequence ID" value="EAL68846"/>
    <property type="gene ID" value="DDB_G0277319"/>
</dbReference>
<dbReference type="GeneID" id="8620900"/>
<dbReference type="KEGG" id="ddi:DDB_G0277319"/>
<dbReference type="dictyBase" id="DDB_G0277319">
    <property type="gene designation" value="atg3"/>
</dbReference>
<dbReference type="VEuPathDB" id="AmoebaDB:DDB_G0277319"/>
<dbReference type="eggNOG" id="KOG2981">
    <property type="taxonomic scope" value="Eukaryota"/>
</dbReference>
<dbReference type="HOGENOM" id="CLU_027518_0_0_1"/>
<dbReference type="InParanoid" id="Q550A8"/>
<dbReference type="OMA" id="HCPTWSW"/>
<dbReference type="PhylomeDB" id="Q550A8"/>
<dbReference type="Reactome" id="R-DDI-1632852">
    <property type="pathway name" value="Macroautophagy"/>
</dbReference>
<dbReference type="PRO" id="PR:Q550A8"/>
<dbReference type="Proteomes" id="UP000002195">
    <property type="component" value="Chromosome 2"/>
</dbReference>
<dbReference type="GO" id="GO:0005829">
    <property type="term" value="C:cytosol"/>
    <property type="evidence" value="ECO:0000318"/>
    <property type="project" value="GO_Central"/>
</dbReference>
<dbReference type="GO" id="GO:0000407">
    <property type="term" value="C:phagophore assembly site"/>
    <property type="evidence" value="ECO:0000318"/>
    <property type="project" value="GO_Central"/>
</dbReference>
<dbReference type="GO" id="GO:0141046">
    <property type="term" value="F:Atg8-family conjugating enzyme activity"/>
    <property type="evidence" value="ECO:0000318"/>
    <property type="project" value="GO_Central"/>
</dbReference>
<dbReference type="GO" id="GO:0000045">
    <property type="term" value="P:autophagosome assembly"/>
    <property type="evidence" value="ECO:0000318"/>
    <property type="project" value="GO_Central"/>
</dbReference>
<dbReference type="GO" id="GO:0000422">
    <property type="term" value="P:autophagy of mitochondrion"/>
    <property type="evidence" value="ECO:0000318"/>
    <property type="project" value="GO_Central"/>
</dbReference>
<dbReference type="GO" id="GO:0061723">
    <property type="term" value="P:glycophagy"/>
    <property type="evidence" value="ECO:0000318"/>
    <property type="project" value="GO_Central"/>
</dbReference>
<dbReference type="GO" id="GO:0044804">
    <property type="term" value="P:nucleophagy"/>
    <property type="evidence" value="ECO:0000318"/>
    <property type="project" value="GO_Central"/>
</dbReference>
<dbReference type="GO" id="GO:0015031">
    <property type="term" value="P:protein transport"/>
    <property type="evidence" value="ECO:0007669"/>
    <property type="project" value="UniProtKB-KW"/>
</dbReference>
<dbReference type="FunFam" id="3.30.1460.50:FF:000007">
    <property type="entry name" value="Autophagy-related protein 3"/>
    <property type="match status" value="1"/>
</dbReference>
<dbReference type="Gene3D" id="3.30.1460.50">
    <property type="match status" value="1"/>
</dbReference>
<dbReference type="InterPro" id="IPR007135">
    <property type="entry name" value="Atg3/Atg10"/>
</dbReference>
<dbReference type="PANTHER" id="PTHR12866">
    <property type="entry name" value="UBIQUITIN-LIKE-CONJUGATING ENZYME ATG3"/>
    <property type="match status" value="1"/>
</dbReference>
<dbReference type="PANTHER" id="PTHR12866:SF2">
    <property type="entry name" value="UBIQUITIN-LIKE-CONJUGATING ENZYME ATG3"/>
    <property type="match status" value="1"/>
</dbReference>
<dbReference type="Pfam" id="PF03987">
    <property type="entry name" value="Autophagy_act_C"/>
    <property type="match status" value="1"/>
</dbReference>
<keyword id="KW-0072">Autophagy</keyword>
<keyword id="KW-0963">Cytoplasm</keyword>
<keyword id="KW-0653">Protein transport</keyword>
<keyword id="KW-1185">Reference proteome</keyword>
<keyword id="KW-0813">Transport</keyword>
<keyword id="KW-0832">Ubl conjugation</keyword>
<keyword id="KW-0833">Ubl conjugation pathway</keyword>
<gene>
    <name type="primary">atg3</name>
    <name type="synonym">apg3</name>
    <name type="ORF">DDB_G0277319</name>
</gene>
<accession>Q550A8</accession>
<accession>Q86K79</accession>
<name>ATG3_DICDI</name>
<proteinExistence type="inferred from homology"/>
<sequence length="338" mass="38817">MLTSFQQAVHKAYVKTVEKVTPTLSTSKFLEEGVLTPEEFVQAGDLLTDKCQTWTWESGDPSRNVSYLPKEKQFLLTRNVPCYNRVRTLENESKASKADEIQIEDDGEDSWVAPQPVGNQDDIEDEKVDISSLKIDDKKPNTTTTTTAKPTNNNNNNNDDEDEDEDGDIPDLDDFQDDNIIEEEDPAVLSKNNKTTTTTTANNNNNNNSENKVEDNDNILRTRTYDISITYDKYYQTPRVWLFGYDENRKPLKPEEIFEDISEDHAHKTVTIDSHPHLGISFAYIHPCRHAAVMKKLVDRQSENGKEPRVDQYLFLFLKFISVVIPTIEYDFTLEFDT</sequence>
<feature type="chain" id="PRO_0000327427" description="Autophagy-related protein 3">
    <location>
        <begin position="1"/>
        <end position="338"/>
    </location>
</feature>
<feature type="region of interest" description="Disordered" evidence="3">
    <location>
        <begin position="91"/>
        <end position="215"/>
    </location>
</feature>
<feature type="compositionally biased region" description="Basic and acidic residues" evidence="3">
    <location>
        <begin position="91"/>
        <end position="100"/>
    </location>
</feature>
<feature type="compositionally biased region" description="Low complexity" evidence="3">
    <location>
        <begin position="141"/>
        <end position="157"/>
    </location>
</feature>
<feature type="compositionally biased region" description="Acidic residues" evidence="3">
    <location>
        <begin position="158"/>
        <end position="186"/>
    </location>
</feature>
<feature type="compositionally biased region" description="Low complexity" evidence="3">
    <location>
        <begin position="192"/>
        <end position="210"/>
    </location>
</feature>
<feature type="active site" description="Glycyl thioester intermediate" evidence="2">
    <location>
        <position position="288"/>
    </location>
</feature>
<evidence type="ECO:0000250" key="1"/>
<evidence type="ECO:0000255" key="2"/>
<evidence type="ECO:0000256" key="3">
    <source>
        <dbReference type="SAM" id="MobiDB-lite"/>
    </source>
</evidence>
<evidence type="ECO:0000305" key="4"/>
<protein>
    <recommendedName>
        <fullName>Autophagy-related protein 3</fullName>
    </recommendedName>
</protein>